<keyword id="KW-0066">ATP synthesis</keyword>
<keyword id="KW-1003">Cell membrane</keyword>
<keyword id="KW-0138">CF(0)</keyword>
<keyword id="KW-0375">Hydrogen ion transport</keyword>
<keyword id="KW-0406">Ion transport</keyword>
<keyword id="KW-0446">Lipid-binding</keyword>
<keyword id="KW-0472">Membrane</keyword>
<keyword id="KW-1185">Reference proteome</keyword>
<keyword id="KW-0812">Transmembrane</keyword>
<keyword id="KW-1133">Transmembrane helix</keyword>
<keyword id="KW-0813">Transport</keyword>
<gene>
    <name evidence="1" type="primary">atpE</name>
    <name type="ordered locus">LSEI_1161</name>
</gene>
<comment type="function">
    <text evidence="1">F(1)F(0) ATP synthase produces ATP from ADP in the presence of a proton or sodium gradient. F-type ATPases consist of two structural domains, F(1) containing the extramembraneous catalytic core and F(0) containing the membrane proton channel, linked together by a central stalk and a peripheral stalk. During catalysis, ATP synthesis in the catalytic domain of F(1) is coupled via a rotary mechanism of the central stalk subunits to proton translocation.</text>
</comment>
<comment type="function">
    <text evidence="1">Key component of the F(0) channel; it plays a direct role in translocation across the membrane. A homomeric c-ring of between 10-14 subunits forms the central stalk rotor element with the F(1) delta and epsilon subunits.</text>
</comment>
<comment type="subunit">
    <text evidence="1">F-type ATPases have 2 components, F(1) - the catalytic core - and F(0) - the membrane proton channel. F(1) has five subunits: alpha(3), beta(3), gamma(1), delta(1), epsilon(1). F(0) has three main subunits: a(1), b(2) and c(10-14). The alpha and beta chains form an alternating ring which encloses part of the gamma chain. F(1) is attached to F(0) by a central stalk formed by the gamma and epsilon chains, while a peripheral stalk is formed by the delta and b chains.</text>
</comment>
<comment type="subcellular location">
    <subcellularLocation>
        <location evidence="1">Cell membrane</location>
        <topology evidence="1">Multi-pass membrane protein</topology>
    </subcellularLocation>
</comment>
<comment type="similarity">
    <text evidence="1">Belongs to the ATPase C chain family.</text>
</comment>
<feature type="chain" id="PRO_1000184402" description="ATP synthase subunit c">
    <location>
        <begin position="1"/>
        <end position="70"/>
    </location>
</feature>
<feature type="transmembrane region" description="Helical" evidence="1">
    <location>
        <begin position="3"/>
        <end position="23"/>
    </location>
</feature>
<feature type="transmembrane region" description="Helical" evidence="1">
    <location>
        <begin position="47"/>
        <end position="67"/>
    </location>
</feature>
<feature type="site" description="Reversibly protonated during proton transport" evidence="1">
    <location>
        <position position="54"/>
    </location>
</feature>
<dbReference type="EMBL" id="CP000423">
    <property type="protein sequence ID" value="ABJ69949.1"/>
    <property type="molecule type" value="Genomic_DNA"/>
</dbReference>
<dbReference type="RefSeq" id="WP_003564959.1">
    <property type="nucleotide sequence ID" value="NC_008526.1"/>
</dbReference>
<dbReference type="RefSeq" id="YP_806391.1">
    <property type="nucleotide sequence ID" value="NC_008526.1"/>
</dbReference>
<dbReference type="SMR" id="Q03A23"/>
<dbReference type="STRING" id="321967.LSEI_1161"/>
<dbReference type="PaxDb" id="321967-LSEI_1161"/>
<dbReference type="GeneID" id="57089855"/>
<dbReference type="KEGG" id="lca:LSEI_1161"/>
<dbReference type="PATRIC" id="fig|321967.11.peg.1134"/>
<dbReference type="HOGENOM" id="CLU_148047_1_1_9"/>
<dbReference type="Proteomes" id="UP000001651">
    <property type="component" value="Chromosome"/>
</dbReference>
<dbReference type="GO" id="GO:0005886">
    <property type="term" value="C:plasma membrane"/>
    <property type="evidence" value="ECO:0007669"/>
    <property type="project" value="UniProtKB-SubCell"/>
</dbReference>
<dbReference type="GO" id="GO:0045259">
    <property type="term" value="C:proton-transporting ATP synthase complex"/>
    <property type="evidence" value="ECO:0007669"/>
    <property type="project" value="UniProtKB-KW"/>
</dbReference>
<dbReference type="GO" id="GO:0033177">
    <property type="term" value="C:proton-transporting two-sector ATPase complex, proton-transporting domain"/>
    <property type="evidence" value="ECO:0007669"/>
    <property type="project" value="InterPro"/>
</dbReference>
<dbReference type="GO" id="GO:0008289">
    <property type="term" value="F:lipid binding"/>
    <property type="evidence" value="ECO:0007669"/>
    <property type="project" value="UniProtKB-KW"/>
</dbReference>
<dbReference type="GO" id="GO:0046933">
    <property type="term" value="F:proton-transporting ATP synthase activity, rotational mechanism"/>
    <property type="evidence" value="ECO:0007669"/>
    <property type="project" value="UniProtKB-UniRule"/>
</dbReference>
<dbReference type="CDD" id="cd18185">
    <property type="entry name" value="ATP-synt_Fo_c_ATPE"/>
    <property type="match status" value="1"/>
</dbReference>
<dbReference type="FunFam" id="1.20.20.10:FF:000004">
    <property type="entry name" value="ATP synthase subunit c"/>
    <property type="match status" value="1"/>
</dbReference>
<dbReference type="Gene3D" id="1.20.20.10">
    <property type="entry name" value="F1F0 ATP synthase subunit C"/>
    <property type="match status" value="1"/>
</dbReference>
<dbReference type="HAMAP" id="MF_01396">
    <property type="entry name" value="ATP_synth_c_bact"/>
    <property type="match status" value="1"/>
</dbReference>
<dbReference type="InterPro" id="IPR005953">
    <property type="entry name" value="ATP_synth_csu_bac/chlpt"/>
</dbReference>
<dbReference type="InterPro" id="IPR000454">
    <property type="entry name" value="ATP_synth_F0_csu"/>
</dbReference>
<dbReference type="InterPro" id="IPR020537">
    <property type="entry name" value="ATP_synth_F0_csu_DDCD_BS"/>
</dbReference>
<dbReference type="InterPro" id="IPR038662">
    <property type="entry name" value="ATP_synth_F0_csu_sf"/>
</dbReference>
<dbReference type="InterPro" id="IPR002379">
    <property type="entry name" value="ATPase_proteolipid_c-like_dom"/>
</dbReference>
<dbReference type="InterPro" id="IPR035921">
    <property type="entry name" value="F/V-ATP_Csub_sf"/>
</dbReference>
<dbReference type="NCBIfam" id="TIGR01260">
    <property type="entry name" value="ATP_synt_c"/>
    <property type="match status" value="1"/>
</dbReference>
<dbReference type="NCBIfam" id="NF005363">
    <property type="entry name" value="PRK06876.1"/>
    <property type="match status" value="1"/>
</dbReference>
<dbReference type="PANTHER" id="PTHR10031">
    <property type="entry name" value="ATP SYNTHASE LIPID-BINDING PROTEIN, MITOCHONDRIAL"/>
    <property type="match status" value="1"/>
</dbReference>
<dbReference type="PANTHER" id="PTHR10031:SF0">
    <property type="entry name" value="ATPASE PROTEIN 9"/>
    <property type="match status" value="1"/>
</dbReference>
<dbReference type="Pfam" id="PF00137">
    <property type="entry name" value="ATP-synt_C"/>
    <property type="match status" value="1"/>
</dbReference>
<dbReference type="PRINTS" id="PR00124">
    <property type="entry name" value="ATPASEC"/>
</dbReference>
<dbReference type="SUPFAM" id="SSF81333">
    <property type="entry name" value="F1F0 ATP synthase subunit C"/>
    <property type="match status" value="1"/>
</dbReference>
<dbReference type="PROSITE" id="PS00605">
    <property type="entry name" value="ATPASE_C"/>
    <property type="match status" value="1"/>
</dbReference>
<sequence>MQFIAASIAAGIAAFGASIGNGMVISKTLEGMARQPEMAGTLRGTMFIGVGLIEAVPILSVVVAFMLMSR</sequence>
<proteinExistence type="inferred from homology"/>
<evidence type="ECO:0000255" key="1">
    <source>
        <dbReference type="HAMAP-Rule" id="MF_01396"/>
    </source>
</evidence>
<organism>
    <name type="scientific">Lacticaseibacillus paracasei (strain ATCC 334 / BCRC 17002 / CCUG 31169 / CIP 107868 / KCTC 3260 / NRRL B-441)</name>
    <name type="common">Lactobacillus paracasei</name>
    <dbReference type="NCBI Taxonomy" id="321967"/>
    <lineage>
        <taxon>Bacteria</taxon>
        <taxon>Bacillati</taxon>
        <taxon>Bacillota</taxon>
        <taxon>Bacilli</taxon>
        <taxon>Lactobacillales</taxon>
        <taxon>Lactobacillaceae</taxon>
        <taxon>Lacticaseibacillus</taxon>
    </lineage>
</organism>
<protein>
    <recommendedName>
        <fullName evidence="1">ATP synthase subunit c</fullName>
    </recommendedName>
    <alternativeName>
        <fullName evidence="1">ATP synthase F(0) sector subunit c</fullName>
    </alternativeName>
    <alternativeName>
        <fullName evidence="1">F-type ATPase subunit c</fullName>
        <shortName evidence="1">F-ATPase subunit c</shortName>
    </alternativeName>
    <alternativeName>
        <fullName evidence="1">Lipid-binding protein</fullName>
    </alternativeName>
</protein>
<name>ATPL_LACP3</name>
<reference key="1">
    <citation type="journal article" date="2006" name="Proc. Natl. Acad. Sci. U.S.A.">
        <title>Comparative genomics of the lactic acid bacteria.</title>
        <authorList>
            <person name="Makarova K.S."/>
            <person name="Slesarev A."/>
            <person name="Wolf Y.I."/>
            <person name="Sorokin A."/>
            <person name="Mirkin B."/>
            <person name="Koonin E.V."/>
            <person name="Pavlov A."/>
            <person name="Pavlova N."/>
            <person name="Karamychev V."/>
            <person name="Polouchine N."/>
            <person name="Shakhova V."/>
            <person name="Grigoriev I."/>
            <person name="Lou Y."/>
            <person name="Rohksar D."/>
            <person name="Lucas S."/>
            <person name="Huang K."/>
            <person name="Goodstein D.M."/>
            <person name="Hawkins T."/>
            <person name="Plengvidhya V."/>
            <person name="Welker D."/>
            <person name="Hughes J."/>
            <person name="Goh Y."/>
            <person name="Benson A."/>
            <person name="Baldwin K."/>
            <person name="Lee J.-H."/>
            <person name="Diaz-Muniz I."/>
            <person name="Dosti B."/>
            <person name="Smeianov V."/>
            <person name="Wechter W."/>
            <person name="Barabote R."/>
            <person name="Lorca G."/>
            <person name="Altermann E."/>
            <person name="Barrangou R."/>
            <person name="Ganesan B."/>
            <person name="Xie Y."/>
            <person name="Rawsthorne H."/>
            <person name="Tamir D."/>
            <person name="Parker C."/>
            <person name="Breidt F."/>
            <person name="Broadbent J.R."/>
            <person name="Hutkins R."/>
            <person name="O'Sullivan D."/>
            <person name="Steele J."/>
            <person name="Unlu G."/>
            <person name="Saier M.H. Jr."/>
            <person name="Klaenhammer T."/>
            <person name="Richardson P."/>
            <person name="Kozyavkin S."/>
            <person name="Weimer B.C."/>
            <person name="Mills D.A."/>
        </authorList>
    </citation>
    <scope>NUCLEOTIDE SEQUENCE [LARGE SCALE GENOMIC DNA]</scope>
    <source>
        <strain>ATCC 334 / BCRC 17002 / CCUG 31169 / CIP 107868 / KCTC 3260 / NRRL B-441</strain>
    </source>
</reference>
<accession>Q03A23</accession>